<evidence type="ECO:0000255" key="1">
    <source>
        <dbReference type="HAMAP-Rule" id="MF_00303"/>
    </source>
</evidence>
<feature type="chain" id="PRO_1000079036" description="Trigger factor">
    <location>
        <begin position="1"/>
        <end position="428"/>
    </location>
</feature>
<feature type="domain" description="PPIase FKBP-type" evidence="1">
    <location>
        <begin position="163"/>
        <end position="248"/>
    </location>
</feature>
<reference key="1">
    <citation type="submission" date="2007-11" db="EMBL/GenBank/DDBJ databases">
        <title>Complete genome sequence of Clostridium phytofermentans ISDg.</title>
        <authorList>
            <person name="Leschine S.B."/>
            <person name="Warnick T.A."/>
            <person name="Blanchard J.L."/>
            <person name="Schnell D.J."/>
            <person name="Petit E.L."/>
            <person name="LaTouf W.G."/>
            <person name="Copeland A."/>
            <person name="Lucas S."/>
            <person name="Lapidus A."/>
            <person name="Barry K."/>
            <person name="Glavina del Rio T."/>
            <person name="Dalin E."/>
            <person name="Tice H."/>
            <person name="Pitluck S."/>
            <person name="Kiss H."/>
            <person name="Brettin T."/>
            <person name="Bruce D."/>
            <person name="Detter J.C."/>
            <person name="Han C."/>
            <person name="Kuske C."/>
            <person name="Schmutz J."/>
            <person name="Larimer F."/>
            <person name="Land M."/>
            <person name="Hauser L."/>
            <person name="Kyrpides N."/>
            <person name="Kim E.A."/>
            <person name="Richardson P."/>
        </authorList>
    </citation>
    <scope>NUCLEOTIDE SEQUENCE [LARGE SCALE GENOMIC DNA]</scope>
    <source>
        <strain>ATCC 700394 / DSM 18823 / ISDg</strain>
    </source>
</reference>
<gene>
    <name evidence="1" type="primary">tig</name>
    <name type="ordered locus">Cphy_0376</name>
</gene>
<accession>A9KSW9</accession>
<organism>
    <name type="scientific">Lachnoclostridium phytofermentans (strain ATCC 700394 / DSM 18823 / ISDg)</name>
    <name type="common">Clostridium phytofermentans</name>
    <dbReference type="NCBI Taxonomy" id="357809"/>
    <lineage>
        <taxon>Bacteria</taxon>
        <taxon>Bacillati</taxon>
        <taxon>Bacillota</taxon>
        <taxon>Clostridia</taxon>
        <taxon>Lachnospirales</taxon>
        <taxon>Lachnospiraceae</taxon>
    </lineage>
</organism>
<proteinExistence type="inferred from homology"/>
<dbReference type="EC" id="5.2.1.8" evidence="1"/>
<dbReference type="EMBL" id="CP000885">
    <property type="protein sequence ID" value="ABX40763.1"/>
    <property type="molecule type" value="Genomic_DNA"/>
</dbReference>
<dbReference type="RefSeq" id="WP_012198406.1">
    <property type="nucleotide sequence ID" value="NC_010001.1"/>
</dbReference>
<dbReference type="SMR" id="A9KSW9"/>
<dbReference type="STRING" id="357809.Cphy_0376"/>
<dbReference type="KEGG" id="cpy:Cphy_0376"/>
<dbReference type="eggNOG" id="COG0544">
    <property type="taxonomic scope" value="Bacteria"/>
</dbReference>
<dbReference type="HOGENOM" id="CLU_033058_3_2_9"/>
<dbReference type="OrthoDB" id="9767721at2"/>
<dbReference type="Proteomes" id="UP000000370">
    <property type="component" value="Chromosome"/>
</dbReference>
<dbReference type="GO" id="GO:0005737">
    <property type="term" value="C:cytoplasm"/>
    <property type="evidence" value="ECO:0007669"/>
    <property type="project" value="UniProtKB-SubCell"/>
</dbReference>
<dbReference type="GO" id="GO:0003755">
    <property type="term" value="F:peptidyl-prolyl cis-trans isomerase activity"/>
    <property type="evidence" value="ECO:0007669"/>
    <property type="project" value="UniProtKB-UniRule"/>
</dbReference>
<dbReference type="GO" id="GO:0044183">
    <property type="term" value="F:protein folding chaperone"/>
    <property type="evidence" value="ECO:0007669"/>
    <property type="project" value="TreeGrafter"/>
</dbReference>
<dbReference type="GO" id="GO:0043022">
    <property type="term" value="F:ribosome binding"/>
    <property type="evidence" value="ECO:0007669"/>
    <property type="project" value="TreeGrafter"/>
</dbReference>
<dbReference type="GO" id="GO:0051083">
    <property type="term" value="P:'de novo' cotranslational protein folding"/>
    <property type="evidence" value="ECO:0007669"/>
    <property type="project" value="TreeGrafter"/>
</dbReference>
<dbReference type="GO" id="GO:0051301">
    <property type="term" value="P:cell division"/>
    <property type="evidence" value="ECO:0007669"/>
    <property type="project" value="UniProtKB-KW"/>
</dbReference>
<dbReference type="GO" id="GO:0061077">
    <property type="term" value="P:chaperone-mediated protein folding"/>
    <property type="evidence" value="ECO:0007669"/>
    <property type="project" value="TreeGrafter"/>
</dbReference>
<dbReference type="GO" id="GO:0015031">
    <property type="term" value="P:protein transport"/>
    <property type="evidence" value="ECO:0007669"/>
    <property type="project" value="UniProtKB-UniRule"/>
</dbReference>
<dbReference type="GO" id="GO:0043335">
    <property type="term" value="P:protein unfolding"/>
    <property type="evidence" value="ECO:0007669"/>
    <property type="project" value="TreeGrafter"/>
</dbReference>
<dbReference type="FunFam" id="3.10.50.40:FF:000001">
    <property type="entry name" value="Trigger factor"/>
    <property type="match status" value="1"/>
</dbReference>
<dbReference type="Gene3D" id="3.10.50.40">
    <property type="match status" value="1"/>
</dbReference>
<dbReference type="Gene3D" id="3.30.70.1050">
    <property type="entry name" value="Trigger factor ribosome-binding domain"/>
    <property type="match status" value="1"/>
</dbReference>
<dbReference type="Gene3D" id="1.10.3120.10">
    <property type="entry name" value="Trigger factor, C-terminal domain"/>
    <property type="match status" value="1"/>
</dbReference>
<dbReference type="HAMAP" id="MF_00303">
    <property type="entry name" value="Trigger_factor_Tig"/>
    <property type="match status" value="1"/>
</dbReference>
<dbReference type="InterPro" id="IPR046357">
    <property type="entry name" value="PPIase_dom_sf"/>
</dbReference>
<dbReference type="InterPro" id="IPR001179">
    <property type="entry name" value="PPIase_FKBP_dom"/>
</dbReference>
<dbReference type="InterPro" id="IPR005215">
    <property type="entry name" value="Trig_fac"/>
</dbReference>
<dbReference type="InterPro" id="IPR008880">
    <property type="entry name" value="Trigger_fac_C"/>
</dbReference>
<dbReference type="InterPro" id="IPR037041">
    <property type="entry name" value="Trigger_fac_C_sf"/>
</dbReference>
<dbReference type="InterPro" id="IPR008881">
    <property type="entry name" value="Trigger_fac_ribosome-bd_bac"/>
</dbReference>
<dbReference type="InterPro" id="IPR036611">
    <property type="entry name" value="Trigger_fac_ribosome-bd_sf"/>
</dbReference>
<dbReference type="InterPro" id="IPR027304">
    <property type="entry name" value="Trigger_fact/SurA_dom_sf"/>
</dbReference>
<dbReference type="NCBIfam" id="TIGR00115">
    <property type="entry name" value="tig"/>
    <property type="match status" value="1"/>
</dbReference>
<dbReference type="PANTHER" id="PTHR30560">
    <property type="entry name" value="TRIGGER FACTOR CHAPERONE AND PEPTIDYL-PROLYL CIS/TRANS ISOMERASE"/>
    <property type="match status" value="1"/>
</dbReference>
<dbReference type="PANTHER" id="PTHR30560:SF3">
    <property type="entry name" value="TRIGGER FACTOR-LIKE PROTEIN TIG, CHLOROPLASTIC"/>
    <property type="match status" value="1"/>
</dbReference>
<dbReference type="Pfam" id="PF00254">
    <property type="entry name" value="FKBP_C"/>
    <property type="match status" value="1"/>
</dbReference>
<dbReference type="Pfam" id="PF05698">
    <property type="entry name" value="Trigger_C"/>
    <property type="match status" value="1"/>
</dbReference>
<dbReference type="Pfam" id="PF05697">
    <property type="entry name" value="Trigger_N"/>
    <property type="match status" value="1"/>
</dbReference>
<dbReference type="PIRSF" id="PIRSF003095">
    <property type="entry name" value="Trigger_factor"/>
    <property type="match status" value="1"/>
</dbReference>
<dbReference type="SUPFAM" id="SSF54534">
    <property type="entry name" value="FKBP-like"/>
    <property type="match status" value="1"/>
</dbReference>
<dbReference type="SUPFAM" id="SSF109998">
    <property type="entry name" value="Triger factor/SurA peptide-binding domain-like"/>
    <property type="match status" value="1"/>
</dbReference>
<dbReference type="SUPFAM" id="SSF102735">
    <property type="entry name" value="Trigger factor ribosome-binding domain"/>
    <property type="match status" value="1"/>
</dbReference>
<dbReference type="PROSITE" id="PS50059">
    <property type="entry name" value="FKBP_PPIASE"/>
    <property type="match status" value="1"/>
</dbReference>
<comment type="function">
    <text evidence="1">Involved in protein export. Acts as a chaperone by maintaining the newly synthesized protein in an open conformation. Functions as a peptidyl-prolyl cis-trans isomerase.</text>
</comment>
<comment type="catalytic activity">
    <reaction evidence="1">
        <text>[protein]-peptidylproline (omega=180) = [protein]-peptidylproline (omega=0)</text>
        <dbReference type="Rhea" id="RHEA:16237"/>
        <dbReference type="Rhea" id="RHEA-COMP:10747"/>
        <dbReference type="Rhea" id="RHEA-COMP:10748"/>
        <dbReference type="ChEBI" id="CHEBI:83833"/>
        <dbReference type="ChEBI" id="CHEBI:83834"/>
        <dbReference type="EC" id="5.2.1.8"/>
    </reaction>
</comment>
<comment type="subcellular location">
    <subcellularLocation>
        <location>Cytoplasm</location>
    </subcellularLocation>
    <text evidence="1">About half TF is bound to the ribosome near the polypeptide exit tunnel while the other half is free in the cytoplasm.</text>
</comment>
<comment type="domain">
    <text evidence="1">Consists of 3 domains; the N-terminus binds the ribosome, the middle domain has PPIase activity, while the C-terminus has intrinsic chaperone activity on its own.</text>
</comment>
<comment type="similarity">
    <text evidence="1">Belongs to the FKBP-type PPIase family. Tig subfamily.</text>
</comment>
<name>TIG_LACP7</name>
<protein>
    <recommendedName>
        <fullName evidence="1">Trigger factor</fullName>
        <shortName evidence="1">TF</shortName>
        <ecNumber evidence="1">5.2.1.8</ecNumber>
    </recommendedName>
    <alternativeName>
        <fullName evidence="1">PPIase</fullName>
    </alternativeName>
</protein>
<sequence>MSFKVEDLGKNMVKLTIEATAEDFDKAIEQAYQKNKGKMNVQGFRKGKAPRAIIEKMYGVGVFYEDAANFIIPEAYEQAIEESKLDVVARPEIDVVQVEKGQPFIFTAEVAVKPEVTLGAYKGVEVSKSEIEVTEDEIMAELDKVREQNSRTITVEDRAVMDKDIVTIDFEGFVDGVAFEGGKGEDYALTIGSHSFIDTFEDQLVGKNIGEDVEVNVTFPTEYHAADLAGKPALFKVKVKEIKAKELPAADDEFAGDVSEFNTLEEYKADLKKSLTEKKDKAAKTAKEDAVVDKVIENATMEIPDAMVDTQKRQMAEDFAQRLKMQGLSLEQYFQFTGLNPNTFMENLGPQALKRIQSRLVLEAVVKAENITVSVEEIDKELAEMASAYQMEVDKLKELIGEKEKEQIVMDMAVQKAIDLVASEAKEV</sequence>
<keyword id="KW-0131">Cell cycle</keyword>
<keyword id="KW-0132">Cell division</keyword>
<keyword id="KW-0143">Chaperone</keyword>
<keyword id="KW-0963">Cytoplasm</keyword>
<keyword id="KW-0413">Isomerase</keyword>
<keyword id="KW-1185">Reference proteome</keyword>
<keyword id="KW-0697">Rotamase</keyword>